<comment type="function">
    <text evidence="1">Catalyzes the conversion of urocanate to 4-imidazolone-5-propionate.</text>
</comment>
<comment type="catalytic activity">
    <reaction evidence="1">
        <text>4-imidazolone-5-propanoate = trans-urocanate + H2O</text>
        <dbReference type="Rhea" id="RHEA:13101"/>
        <dbReference type="ChEBI" id="CHEBI:15377"/>
        <dbReference type="ChEBI" id="CHEBI:17771"/>
        <dbReference type="ChEBI" id="CHEBI:77893"/>
        <dbReference type="EC" id="4.2.1.49"/>
    </reaction>
</comment>
<comment type="cofactor">
    <cofactor evidence="1">
        <name>NAD(+)</name>
        <dbReference type="ChEBI" id="CHEBI:57540"/>
    </cofactor>
    <text evidence="1">Binds 1 NAD(+) per subunit.</text>
</comment>
<comment type="pathway">
    <text evidence="1">Amino-acid degradation; L-histidine degradation into L-glutamate; N-formimidoyl-L-glutamate from L-histidine: step 2/3.</text>
</comment>
<comment type="subcellular location">
    <subcellularLocation>
        <location evidence="1">Cytoplasm</location>
    </subcellularLocation>
</comment>
<comment type="similarity">
    <text evidence="1">Belongs to the urocanase family.</text>
</comment>
<name>HUTU_SHESH</name>
<organism>
    <name type="scientific">Shewanella sediminis (strain HAW-EB3)</name>
    <dbReference type="NCBI Taxonomy" id="425104"/>
    <lineage>
        <taxon>Bacteria</taxon>
        <taxon>Pseudomonadati</taxon>
        <taxon>Pseudomonadota</taxon>
        <taxon>Gammaproteobacteria</taxon>
        <taxon>Alteromonadales</taxon>
        <taxon>Shewanellaceae</taxon>
        <taxon>Shewanella</taxon>
    </lineage>
</organism>
<sequence length="556" mass="60691">MDKRHDPSRRIIAPHGTKLSCKSWFTEAPMRMLMNNLHPDVAERPEDLVVYGGIGRAARDWECYDKIIEVLQRLEEDETLLVQSGKPVGVFKTHSNAPRVIIANSNLVPHWANWEHFNELDKKGLAMYGQMTAGSWIYIGSQGIVQGTYETFAAMATKHFGGSSKGKWILTGGLGGMGGAQPLAGTMAGYSVLTCEVDETRIDFRLRTKYVDKKTDSLDEALAMIDEANKSGKPVSVGLLANAADVFAELVERGVTPDVVTDQTSAHDPLNGYLPQNWTLEYAAEMRKKDEAAVVKAAKQSMAVQVRAMLALQAAGAATTDYGNNIRQMAFEEGVENAFDFPGFVPAYVRPLFCEGIGPFRWVALSGDPEDIYKTDAKVKELIPDNPQLHNWLDMARERIAFQGLPSRICWVGLKDRARLALAFNEMVKSGELSAPVVIGRDHLDSGSVASPNRETESMLDGSDAVSDWPLMNALLNTASGATWVSLHHGGGVGMGFSQHSGVVIVADGSDEAAVRLGRVLWNDPATGVMRHADAGYDIAKKCAKEQNLDLPMLEK</sequence>
<protein>
    <recommendedName>
        <fullName evidence="1">Urocanate hydratase</fullName>
        <shortName evidence="1">Urocanase</shortName>
        <ecNumber evidence="1">4.2.1.49</ecNumber>
    </recommendedName>
    <alternativeName>
        <fullName evidence="1">Imidazolonepropionate hydrolase</fullName>
    </alternativeName>
</protein>
<proteinExistence type="inferred from homology"/>
<evidence type="ECO:0000255" key="1">
    <source>
        <dbReference type="HAMAP-Rule" id="MF_00577"/>
    </source>
</evidence>
<reference key="1">
    <citation type="submission" date="2007-08" db="EMBL/GenBank/DDBJ databases">
        <title>Complete sequence of Shewanella sediminis HAW-EB3.</title>
        <authorList>
            <consortium name="US DOE Joint Genome Institute"/>
            <person name="Copeland A."/>
            <person name="Lucas S."/>
            <person name="Lapidus A."/>
            <person name="Barry K."/>
            <person name="Glavina del Rio T."/>
            <person name="Dalin E."/>
            <person name="Tice H."/>
            <person name="Pitluck S."/>
            <person name="Chertkov O."/>
            <person name="Brettin T."/>
            <person name="Bruce D."/>
            <person name="Detter J.C."/>
            <person name="Han C."/>
            <person name="Schmutz J."/>
            <person name="Larimer F."/>
            <person name="Land M."/>
            <person name="Hauser L."/>
            <person name="Kyrpides N."/>
            <person name="Kim E."/>
            <person name="Zhao J.-S."/>
            <person name="Richardson P."/>
        </authorList>
    </citation>
    <scope>NUCLEOTIDE SEQUENCE [LARGE SCALE GENOMIC DNA]</scope>
    <source>
        <strain>HAW-EB3</strain>
    </source>
</reference>
<keyword id="KW-0963">Cytoplasm</keyword>
<keyword id="KW-0369">Histidine metabolism</keyword>
<keyword id="KW-0456">Lyase</keyword>
<keyword id="KW-0520">NAD</keyword>
<keyword id="KW-1185">Reference proteome</keyword>
<gene>
    <name evidence="1" type="primary">hutU</name>
    <name type="ordered locus">Ssed_4447</name>
</gene>
<dbReference type="EC" id="4.2.1.49" evidence="1"/>
<dbReference type="EMBL" id="CP000821">
    <property type="protein sequence ID" value="ABV39049.1"/>
    <property type="molecule type" value="Genomic_DNA"/>
</dbReference>
<dbReference type="RefSeq" id="WP_012144776.1">
    <property type="nucleotide sequence ID" value="NC_009831.1"/>
</dbReference>
<dbReference type="SMR" id="A8G1S6"/>
<dbReference type="STRING" id="425104.Ssed_4447"/>
<dbReference type="KEGG" id="sse:Ssed_4447"/>
<dbReference type="eggNOG" id="COG2987">
    <property type="taxonomic scope" value="Bacteria"/>
</dbReference>
<dbReference type="HOGENOM" id="CLU_018868_0_1_6"/>
<dbReference type="OrthoDB" id="9764874at2"/>
<dbReference type="UniPathway" id="UPA00379">
    <property type="reaction ID" value="UER00550"/>
</dbReference>
<dbReference type="Proteomes" id="UP000002015">
    <property type="component" value="Chromosome"/>
</dbReference>
<dbReference type="GO" id="GO:0005737">
    <property type="term" value="C:cytoplasm"/>
    <property type="evidence" value="ECO:0007669"/>
    <property type="project" value="UniProtKB-SubCell"/>
</dbReference>
<dbReference type="GO" id="GO:0016153">
    <property type="term" value="F:urocanate hydratase activity"/>
    <property type="evidence" value="ECO:0007669"/>
    <property type="project" value="UniProtKB-UniRule"/>
</dbReference>
<dbReference type="GO" id="GO:0019556">
    <property type="term" value="P:L-histidine catabolic process to glutamate and formamide"/>
    <property type="evidence" value="ECO:0007669"/>
    <property type="project" value="UniProtKB-UniPathway"/>
</dbReference>
<dbReference type="GO" id="GO:0019557">
    <property type="term" value="P:L-histidine catabolic process to glutamate and formate"/>
    <property type="evidence" value="ECO:0007669"/>
    <property type="project" value="UniProtKB-UniPathway"/>
</dbReference>
<dbReference type="FunFam" id="3.40.50.10730:FF:000001">
    <property type="entry name" value="Urocanate hydratase"/>
    <property type="match status" value="1"/>
</dbReference>
<dbReference type="Gene3D" id="3.40.50.10730">
    <property type="entry name" value="Urocanase like domains"/>
    <property type="match status" value="1"/>
</dbReference>
<dbReference type="Gene3D" id="3.40.1770.10">
    <property type="entry name" value="Urocanase superfamily"/>
    <property type="match status" value="1"/>
</dbReference>
<dbReference type="HAMAP" id="MF_00577">
    <property type="entry name" value="HutU"/>
    <property type="match status" value="1"/>
</dbReference>
<dbReference type="InterPro" id="IPR055351">
    <property type="entry name" value="Urocanase"/>
</dbReference>
<dbReference type="InterPro" id="IPR023637">
    <property type="entry name" value="Urocanase-like"/>
</dbReference>
<dbReference type="InterPro" id="IPR035401">
    <property type="entry name" value="Urocanase_C"/>
</dbReference>
<dbReference type="InterPro" id="IPR038364">
    <property type="entry name" value="Urocanase_central_sf"/>
</dbReference>
<dbReference type="InterPro" id="IPR023636">
    <property type="entry name" value="Urocanase_CS"/>
</dbReference>
<dbReference type="InterPro" id="IPR035400">
    <property type="entry name" value="Urocanase_N"/>
</dbReference>
<dbReference type="InterPro" id="IPR035085">
    <property type="entry name" value="Urocanase_Rossmann-like"/>
</dbReference>
<dbReference type="InterPro" id="IPR036190">
    <property type="entry name" value="Urocanase_sf"/>
</dbReference>
<dbReference type="NCBIfam" id="TIGR01228">
    <property type="entry name" value="hutU"/>
    <property type="match status" value="1"/>
</dbReference>
<dbReference type="NCBIfam" id="NF003820">
    <property type="entry name" value="PRK05414.1"/>
    <property type="match status" value="1"/>
</dbReference>
<dbReference type="PANTHER" id="PTHR12216">
    <property type="entry name" value="UROCANATE HYDRATASE"/>
    <property type="match status" value="1"/>
</dbReference>
<dbReference type="PANTHER" id="PTHR12216:SF4">
    <property type="entry name" value="UROCANATE HYDRATASE"/>
    <property type="match status" value="1"/>
</dbReference>
<dbReference type="Pfam" id="PF01175">
    <property type="entry name" value="Urocanase"/>
    <property type="match status" value="1"/>
</dbReference>
<dbReference type="Pfam" id="PF17392">
    <property type="entry name" value="Urocanase_C"/>
    <property type="match status" value="1"/>
</dbReference>
<dbReference type="Pfam" id="PF17391">
    <property type="entry name" value="Urocanase_N"/>
    <property type="match status" value="1"/>
</dbReference>
<dbReference type="PIRSF" id="PIRSF001423">
    <property type="entry name" value="Urocanate_hydrat"/>
    <property type="match status" value="1"/>
</dbReference>
<dbReference type="SUPFAM" id="SSF111326">
    <property type="entry name" value="Urocanase"/>
    <property type="match status" value="1"/>
</dbReference>
<dbReference type="PROSITE" id="PS01233">
    <property type="entry name" value="UROCANASE"/>
    <property type="match status" value="1"/>
</dbReference>
<feature type="chain" id="PRO_1000082357" description="Urocanate hydratase">
    <location>
        <begin position="1"/>
        <end position="556"/>
    </location>
</feature>
<feature type="active site" evidence="1">
    <location>
        <position position="410"/>
    </location>
</feature>
<feature type="binding site" evidence="1">
    <location>
        <begin position="52"/>
        <end position="53"/>
    </location>
    <ligand>
        <name>NAD(+)</name>
        <dbReference type="ChEBI" id="CHEBI:57540"/>
    </ligand>
</feature>
<feature type="binding site" evidence="1">
    <location>
        <position position="130"/>
    </location>
    <ligand>
        <name>NAD(+)</name>
        <dbReference type="ChEBI" id="CHEBI:57540"/>
    </ligand>
</feature>
<feature type="binding site" evidence="1">
    <location>
        <begin position="176"/>
        <end position="178"/>
    </location>
    <ligand>
        <name>NAD(+)</name>
        <dbReference type="ChEBI" id="CHEBI:57540"/>
    </ligand>
</feature>
<feature type="binding site" evidence="1">
    <location>
        <position position="196"/>
    </location>
    <ligand>
        <name>NAD(+)</name>
        <dbReference type="ChEBI" id="CHEBI:57540"/>
    </ligand>
</feature>
<feature type="binding site" evidence="1">
    <location>
        <position position="201"/>
    </location>
    <ligand>
        <name>NAD(+)</name>
        <dbReference type="ChEBI" id="CHEBI:57540"/>
    </ligand>
</feature>
<feature type="binding site" evidence="1">
    <location>
        <begin position="242"/>
        <end position="243"/>
    </location>
    <ligand>
        <name>NAD(+)</name>
        <dbReference type="ChEBI" id="CHEBI:57540"/>
    </ligand>
</feature>
<feature type="binding site" evidence="1">
    <location>
        <begin position="263"/>
        <end position="267"/>
    </location>
    <ligand>
        <name>NAD(+)</name>
        <dbReference type="ChEBI" id="CHEBI:57540"/>
    </ligand>
</feature>
<feature type="binding site" evidence="1">
    <location>
        <begin position="273"/>
        <end position="274"/>
    </location>
    <ligand>
        <name>NAD(+)</name>
        <dbReference type="ChEBI" id="CHEBI:57540"/>
    </ligand>
</feature>
<feature type="binding site" evidence="1">
    <location>
        <position position="322"/>
    </location>
    <ligand>
        <name>NAD(+)</name>
        <dbReference type="ChEBI" id="CHEBI:57540"/>
    </ligand>
</feature>
<feature type="binding site" evidence="1">
    <location>
        <position position="492"/>
    </location>
    <ligand>
        <name>NAD(+)</name>
        <dbReference type="ChEBI" id="CHEBI:57540"/>
    </ligand>
</feature>
<accession>A8G1S6</accession>